<feature type="chain" id="PRO_0000138358" description="UvrABC system protein C">
    <location>
        <begin position="1"/>
        <end position="610"/>
    </location>
</feature>
<feature type="domain" description="GIY-YIG" evidence="1">
    <location>
        <begin position="16"/>
        <end position="94"/>
    </location>
</feature>
<feature type="domain" description="UVR" evidence="1">
    <location>
        <begin position="204"/>
        <end position="239"/>
    </location>
</feature>
<gene>
    <name evidence="1" type="primary">uvrC</name>
    <name type="ordered locus">VC_1214</name>
</gene>
<sequence>MSTQFDSAPFLKTVTNQPGVYRMYNAEAEVIYVGKAKDLKKRLTSYFRKNLDSEKTKALVSNIAKIDVTVTHTETEALILEHNYIKQYLPKYNVLLRDDKSYPYIFLSAHKHPRLSSHRGAKKRRGEYFGPYPDSGAVRETLHLIQKIFPVRQCEDTVYSNRTRPCLMYQIGRCAGPCVKGLISDQGYQEIVHYLRLFLQGKDNQVLSILVEKMEQASRELRFEDAAKARDQIQAIRRVQEQQFVSDDSLEDLDVLGFAQENGIACIHILMIRQGKVLGSRSHFPKIPSDTSQVEVFESFLSQYYLSHSEARSIPARIILNRGLTEETEALQIAISELAGRKVTFHVNPTGTRGRYLKLANTNALTAITTKMNHKMTISQRFKALQEELGMDAITRMECFDISHTMGESTMASCVVFNQEGPLKQEYRRYNITGITGGDDYAAMAQVLERRYSKQLDSSKIPDIIFIDGGKGQLNRAYEIISSCWQDWPKYPKIIGIAKGVTRKPGLETLITIDGDEFHLPSDAPALHLIQHIRDESHNHAIAGHRAQRGKTRRTSTLEGIEGVGPKRRQALLKYLGGMQELKRASVEEIAKVPGISHALAENIYQALKQ</sequence>
<keyword id="KW-0963">Cytoplasm</keyword>
<keyword id="KW-0227">DNA damage</keyword>
<keyword id="KW-0228">DNA excision</keyword>
<keyword id="KW-0234">DNA repair</keyword>
<keyword id="KW-0267">Excision nuclease</keyword>
<keyword id="KW-1185">Reference proteome</keyword>
<keyword id="KW-0742">SOS response</keyword>
<protein>
    <recommendedName>
        <fullName evidence="1">UvrABC system protein C</fullName>
        <shortName evidence="1">Protein UvrC</shortName>
    </recommendedName>
    <alternativeName>
        <fullName evidence="1">Excinuclease ABC subunit C</fullName>
    </alternativeName>
</protein>
<accession>Q9KSP2</accession>
<comment type="function">
    <text evidence="1">The UvrABC repair system catalyzes the recognition and processing of DNA lesions. UvrC both incises the 5' and 3' sides of the lesion. The N-terminal half is responsible for the 3' incision and the C-terminal half is responsible for the 5' incision.</text>
</comment>
<comment type="subunit">
    <text evidence="1">Interacts with UvrB in an incision complex.</text>
</comment>
<comment type="subcellular location">
    <subcellularLocation>
        <location evidence="1">Cytoplasm</location>
    </subcellularLocation>
</comment>
<comment type="similarity">
    <text evidence="1">Belongs to the UvrC family.</text>
</comment>
<dbReference type="EMBL" id="AE003852">
    <property type="protein sequence ID" value="AAF94373.1"/>
    <property type="molecule type" value="Genomic_DNA"/>
</dbReference>
<dbReference type="PIR" id="G82227">
    <property type="entry name" value="G82227"/>
</dbReference>
<dbReference type="RefSeq" id="NP_230859.1">
    <property type="nucleotide sequence ID" value="NC_002505.1"/>
</dbReference>
<dbReference type="RefSeq" id="WP_000107095.1">
    <property type="nucleotide sequence ID" value="NZ_LT906614.1"/>
</dbReference>
<dbReference type="SMR" id="Q9KSP2"/>
<dbReference type="STRING" id="243277.VC_1214"/>
<dbReference type="DNASU" id="2614647"/>
<dbReference type="EnsemblBacteria" id="AAF94373">
    <property type="protein sequence ID" value="AAF94373"/>
    <property type="gene ID" value="VC_1214"/>
</dbReference>
<dbReference type="KEGG" id="vch:VC_1214"/>
<dbReference type="PATRIC" id="fig|243277.26.peg.1161"/>
<dbReference type="eggNOG" id="COG0322">
    <property type="taxonomic scope" value="Bacteria"/>
</dbReference>
<dbReference type="HOGENOM" id="CLU_014841_3_0_6"/>
<dbReference type="Proteomes" id="UP000000584">
    <property type="component" value="Chromosome 1"/>
</dbReference>
<dbReference type="GO" id="GO:0005737">
    <property type="term" value="C:cytoplasm"/>
    <property type="evidence" value="ECO:0007669"/>
    <property type="project" value="UniProtKB-SubCell"/>
</dbReference>
<dbReference type="GO" id="GO:0009380">
    <property type="term" value="C:excinuclease repair complex"/>
    <property type="evidence" value="ECO:0000318"/>
    <property type="project" value="GO_Central"/>
</dbReference>
<dbReference type="GO" id="GO:0003677">
    <property type="term" value="F:DNA binding"/>
    <property type="evidence" value="ECO:0007669"/>
    <property type="project" value="UniProtKB-UniRule"/>
</dbReference>
<dbReference type="GO" id="GO:0009381">
    <property type="term" value="F:excinuclease ABC activity"/>
    <property type="evidence" value="ECO:0007669"/>
    <property type="project" value="UniProtKB-UniRule"/>
</dbReference>
<dbReference type="GO" id="GO:0006974">
    <property type="term" value="P:DNA damage response"/>
    <property type="evidence" value="ECO:0000318"/>
    <property type="project" value="GO_Central"/>
</dbReference>
<dbReference type="GO" id="GO:0006289">
    <property type="term" value="P:nucleotide-excision repair"/>
    <property type="evidence" value="ECO:0007669"/>
    <property type="project" value="UniProtKB-UniRule"/>
</dbReference>
<dbReference type="GO" id="GO:0009432">
    <property type="term" value="P:SOS response"/>
    <property type="evidence" value="ECO:0007669"/>
    <property type="project" value="UniProtKB-UniRule"/>
</dbReference>
<dbReference type="CDD" id="cd10434">
    <property type="entry name" value="GIY-YIG_UvrC_Cho"/>
    <property type="match status" value="1"/>
</dbReference>
<dbReference type="FunFam" id="1.10.150.20:FF:000005">
    <property type="entry name" value="UvrABC system protein C"/>
    <property type="match status" value="1"/>
</dbReference>
<dbReference type="FunFam" id="3.30.420.340:FF:000001">
    <property type="entry name" value="UvrABC system protein C"/>
    <property type="match status" value="1"/>
</dbReference>
<dbReference type="FunFam" id="3.40.1440.10:FF:000001">
    <property type="entry name" value="UvrABC system protein C"/>
    <property type="match status" value="1"/>
</dbReference>
<dbReference type="FunFam" id="4.10.860.10:FF:000002">
    <property type="entry name" value="UvrABC system protein C"/>
    <property type="match status" value="1"/>
</dbReference>
<dbReference type="Gene3D" id="1.10.150.20">
    <property type="entry name" value="5' to 3' exonuclease, C-terminal subdomain"/>
    <property type="match status" value="1"/>
</dbReference>
<dbReference type="Gene3D" id="3.40.1440.10">
    <property type="entry name" value="GIY-YIG endonuclease"/>
    <property type="match status" value="1"/>
</dbReference>
<dbReference type="Gene3D" id="4.10.860.10">
    <property type="entry name" value="UVR domain"/>
    <property type="match status" value="1"/>
</dbReference>
<dbReference type="Gene3D" id="3.30.420.340">
    <property type="entry name" value="UvrC, RNAse H endonuclease domain"/>
    <property type="match status" value="1"/>
</dbReference>
<dbReference type="HAMAP" id="MF_00203">
    <property type="entry name" value="UvrC"/>
    <property type="match status" value="1"/>
</dbReference>
<dbReference type="InterPro" id="IPR000305">
    <property type="entry name" value="GIY-YIG_endonuc"/>
</dbReference>
<dbReference type="InterPro" id="IPR035901">
    <property type="entry name" value="GIY-YIG_endonuc_sf"/>
</dbReference>
<dbReference type="InterPro" id="IPR047296">
    <property type="entry name" value="GIY-YIG_UvrC_Cho"/>
</dbReference>
<dbReference type="InterPro" id="IPR003583">
    <property type="entry name" value="Hlx-hairpin-Hlx_DNA-bd_motif"/>
</dbReference>
<dbReference type="InterPro" id="IPR010994">
    <property type="entry name" value="RuvA_2-like"/>
</dbReference>
<dbReference type="InterPro" id="IPR001943">
    <property type="entry name" value="UVR_dom"/>
</dbReference>
<dbReference type="InterPro" id="IPR036876">
    <property type="entry name" value="UVR_dom_sf"/>
</dbReference>
<dbReference type="InterPro" id="IPR050066">
    <property type="entry name" value="UvrABC_protein_C"/>
</dbReference>
<dbReference type="InterPro" id="IPR004791">
    <property type="entry name" value="UvrC"/>
</dbReference>
<dbReference type="InterPro" id="IPR001162">
    <property type="entry name" value="UvrC_RNase_H_dom"/>
</dbReference>
<dbReference type="InterPro" id="IPR038476">
    <property type="entry name" value="UvrC_RNase_H_dom_sf"/>
</dbReference>
<dbReference type="NCBIfam" id="NF001824">
    <property type="entry name" value="PRK00558.1-5"/>
    <property type="match status" value="1"/>
</dbReference>
<dbReference type="NCBIfam" id="TIGR00194">
    <property type="entry name" value="uvrC"/>
    <property type="match status" value="1"/>
</dbReference>
<dbReference type="PANTHER" id="PTHR30562:SF1">
    <property type="entry name" value="UVRABC SYSTEM PROTEIN C"/>
    <property type="match status" value="1"/>
</dbReference>
<dbReference type="PANTHER" id="PTHR30562">
    <property type="entry name" value="UVRC/OXIDOREDUCTASE"/>
    <property type="match status" value="1"/>
</dbReference>
<dbReference type="Pfam" id="PF01541">
    <property type="entry name" value="GIY-YIG"/>
    <property type="match status" value="1"/>
</dbReference>
<dbReference type="Pfam" id="PF14520">
    <property type="entry name" value="HHH_5"/>
    <property type="match status" value="1"/>
</dbReference>
<dbReference type="Pfam" id="PF02151">
    <property type="entry name" value="UVR"/>
    <property type="match status" value="1"/>
</dbReference>
<dbReference type="Pfam" id="PF22920">
    <property type="entry name" value="UvrC_RNaseH"/>
    <property type="match status" value="1"/>
</dbReference>
<dbReference type="Pfam" id="PF08459">
    <property type="entry name" value="UvrC_RNaseH_dom"/>
    <property type="match status" value="1"/>
</dbReference>
<dbReference type="SMART" id="SM00465">
    <property type="entry name" value="GIYc"/>
    <property type="match status" value="1"/>
</dbReference>
<dbReference type="SMART" id="SM00278">
    <property type="entry name" value="HhH1"/>
    <property type="match status" value="2"/>
</dbReference>
<dbReference type="SUPFAM" id="SSF46600">
    <property type="entry name" value="C-terminal UvrC-binding domain of UvrB"/>
    <property type="match status" value="1"/>
</dbReference>
<dbReference type="SUPFAM" id="SSF82771">
    <property type="entry name" value="GIY-YIG endonuclease"/>
    <property type="match status" value="1"/>
</dbReference>
<dbReference type="SUPFAM" id="SSF47781">
    <property type="entry name" value="RuvA domain 2-like"/>
    <property type="match status" value="1"/>
</dbReference>
<dbReference type="PROSITE" id="PS50164">
    <property type="entry name" value="GIY_YIG"/>
    <property type="match status" value="1"/>
</dbReference>
<dbReference type="PROSITE" id="PS50151">
    <property type="entry name" value="UVR"/>
    <property type="match status" value="1"/>
</dbReference>
<dbReference type="PROSITE" id="PS50165">
    <property type="entry name" value="UVRC"/>
    <property type="match status" value="1"/>
</dbReference>
<proteinExistence type="inferred from homology"/>
<reference key="1">
    <citation type="journal article" date="2000" name="Nature">
        <title>DNA sequence of both chromosomes of the cholera pathogen Vibrio cholerae.</title>
        <authorList>
            <person name="Heidelberg J.F."/>
            <person name="Eisen J.A."/>
            <person name="Nelson W.C."/>
            <person name="Clayton R.A."/>
            <person name="Gwinn M.L."/>
            <person name="Dodson R.J."/>
            <person name="Haft D.H."/>
            <person name="Hickey E.K."/>
            <person name="Peterson J.D."/>
            <person name="Umayam L.A."/>
            <person name="Gill S.R."/>
            <person name="Nelson K.E."/>
            <person name="Read T.D."/>
            <person name="Tettelin H."/>
            <person name="Richardson D.L."/>
            <person name="Ermolaeva M.D."/>
            <person name="Vamathevan J.J."/>
            <person name="Bass S."/>
            <person name="Qin H."/>
            <person name="Dragoi I."/>
            <person name="Sellers P."/>
            <person name="McDonald L.A."/>
            <person name="Utterback T.R."/>
            <person name="Fleischmann R.D."/>
            <person name="Nierman W.C."/>
            <person name="White O."/>
            <person name="Salzberg S.L."/>
            <person name="Smith H.O."/>
            <person name="Colwell R.R."/>
            <person name="Mekalanos J.J."/>
            <person name="Venter J.C."/>
            <person name="Fraser C.M."/>
        </authorList>
    </citation>
    <scope>NUCLEOTIDE SEQUENCE [LARGE SCALE GENOMIC DNA]</scope>
    <source>
        <strain>ATCC 39315 / El Tor Inaba N16961</strain>
    </source>
</reference>
<organism>
    <name type="scientific">Vibrio cholerae serotype O1 (strain ATCC 39315 / El Tor Inaba N16961)</name>
    <dbReference type="NCBI Taxonomy" id="243277"/>
    <lineage>
        <taxon>Bacteria</taxon>
        <taxon>Pseudomonadati</taxon>
        <taxon>Pseudomonadota</taxon>
        <taxon>Gammaproteobacteria</taxon>
        <taxon>Vibrionales</taxon>
        <taxon>Vibrionaceae</taxon>
        <taxon>Vibrio</taxon>
    </lineage>
</organism>
<name>UVRC_VIBCH</name>
<evidence type="ECO:0000255" key="1">
    <source>
        <dbReference type="HAMAP-Rule" id="MF_00203"/>
    </source>
</evidence>